<evidence type="ECO:0000250" key="1">
    <source>
        <dbReference type="UniProtKB" id="A0A1C9J6A7"/>
    </source>
</evidence>
<evidence type="ECO:0000250" key="2">
    <source>
        <dbReference type="UniProtKB" id="A0A1D6EFT8"/>
    </source>
</evidence>
<evidence type="ECO:0000250" key="3">
    <source>
        <dbReference type="UniProtKB" id="B1B1U3"/>
    </source>
</evidence>
<evidence type="ECO:0000250" key="4">
    <source>
        <dbReference type="UniProtKB" id="Q40577"/>
    </source>
</evidence>
<evidence type="ECO:0000250" key="5">
    <source>
        <dbReference type="UniProtKB" id="Q6JD73"/>
    </source>
</evidence>
<evidence type="ECO:0000250" key="6">
    <source>
        <dbReference type="UniProtKB" id="Q6Q3H2"/>
    </source>
</evidence>
<evidence type="ECO:0000305" key="7"/>
<evidence type="ECO:0000312" key="8">
    <source>
        <dbReference type="EMBL" id="PWZ40931.1"/>
    </source>
</evidence>
<sequence length="557" mass="63237">MAPSNIVVQSSSTPPVAGGDEEFAPSVWGDFFVTYAPPVSQASEQRMSERAELLKAQVCQAFDAASMDVAGLVTYVDTLERLGLDNHFRDLIGAALERIGAEELPEHGGGLHIVALRFRLLRQHGIWVSTDVFDAFREDAGGFCSSLCSDDPRGLLSLYNAAHMAVPGEVVLDDAIAFARGRLLDIISKGEVRSPVSEQITRALDIPLPRFTRRLETMHYIAEYEHEEAHDGLLLELARLNFVLVRALHLRELKDLSLWWRELYNTVKLPYARDRMVEIYFWTCGMLHEEEYSLARMFFAKTFGMVSLMDDTFDVHATLDECHKLKEAMQRWDESEVSILPEYLRLLYIKTLSNFKEFEEILEPNKKYRMAYTKEAYKLCSKNYLKEAIWSNQKYQPSFKEHEELSIMTSGLPMLTILTLMGFGDEATPEAFEWVSSVPEMVRAGSQVTRFLNDLSSYKLGKNKKDMPGSVETYMVENGLTGDEAAAAIAALLENRWRILNQTRMEIDHTLLPAVQVVVNMARANEIIYLHGRDAYTFGADLKDLVTTLFLKQVLPL</sequence>
<comment type="function">
    <text evidence="2">Component of the volatile terpenes biosynthesis pathways (By similarity). Dihydroxylated sesquiterpenoid synthase that generates dually hydroxylated products directly from (E,E)-farnesyl diphosphate, primarily eudesmane-2,11-diol, along with two closely related structural isomers (By similarity).</text>
</comment>
<comment type="catalytic activity">
    <reaction evidence="2">
        <text>(2E,6E)-farnesyl diphosphate + 2 H2O = 7-epi-ent-eudesmane-5,11-diol + diphosphate</text>
        <dbReference type="Rhea" id="RHEA:58164"/>
        <dbReference type="ChEBI" id="CHEBI:15377"/>
        <dbReference type="ChEBI" id="CHEBI:33019"/>
        <dbReference type="ChEBI" id="CHEBI:142536"/>
        <dbReference type="ChEBI" id="CHEBI:175763"/>
        <dbReference type="EC" id="4.2.3.197"/>
    </reaction>
    <physiologicalReaction direction="left-to-right" evidence="2">
        <dbReference type="Rhea" id="RHEA:58165"/>
    </physiologicalReaction>
</comment>
<comment type="cofactor">
    <cofactor evidence="1">
        <name>Mg(2+)</name>
        <dbReference type="ChEBI" id="CHEBI:18420"/>
    </cofactor>
    <cofactor evidence="1">
        <name>Mn(2+)</name>
        <dbReference type="ChEBI" id="CHEBI:29035"/>
    </cofactor>
    <text evidence="1">Binds 3 Mg(2+) or Mn(2+) ions per subunit.</text>
</comment>
<comment type="pathway">
    <text evidence="7">Secondary metabolite biosynthesis; terpenoid biosynthesis.</text>
</comment>
<comment type="subunit">
    <text evidence="5">Monomer.</text>
</comment>
<comment type="subcellular location">
    <subcellularLocation>
        <location evidence="6">Cytoplasm</location>
    </subcellularLocation>
</comment>
<comment type="domain">
    <text evidence="1">The Asp-Asp-Xaa-Xaa-Asp/Glu (DDXXD/E) motif is important for the catalytic activity, presumably through binding to Mg(2+).</text>
</comment>
<comment type="similarity">
    <text evidence="7">Belongs to the terpene synthase family.</text>
</comment>
<name>EDSM_MAIZE</name>
<feature type="chain" id="PRO_0000447518" description="Eudesmanediol synthase">
    <location>
        <begin position="1"/>
        <end position="557"/>
    </location>
</feature>
<feature type="short sequence motif" description="DDXXD motif" evidence="3">
    <location>
        <begin position="310"/>
        <end position="314"/>
    </location>
</feature>
<feature type="binding site" evidence="4">
    <location>
        <position position="310"/>
    </location>
    <ligand>
        <name>Mg(2+)</name>
        <dbReference type="ChEBI" id="CHEBI:18420"/>
        <label>1</label>
    </ligand>
</feature>
<feature type="binding site" evidence="4">
    <location>
        <position position="310"/>
    </location>
    <ligand>
        <name>Mg(2+)</name>
        <dbReference type="ChEBI" id="CHEBI:18420"/>
        <label>2</label>
    </ligand>
</feature>
<feature type="binding site" evidence="1">
    <location>
        <position position="310"/>
    </location>
    <ligand>
        <name>substrate</name>
    </ligand>
</feature>
<feature type="binding site" evidence="4">
    <location>
        <position position="314"/>
    </location>
    <ligand>
        <name>Mg(2+)</name>
        <dbReference type="ChEBI" id="CHEBI:18420"/>
        <label>1</label>
    </ligand>
</feature>
<feature type="binding site" evidence="4">
    <location>
        <position position="314"/>
    </location>
    <ligand>
        <name>Mg(2+)</name>
        <dbReference type="ChEBI" id="CHEBI:18420"/>
        <label>2</label>
    </ligand>
</feature>
<feature type="binding site" evidence="1">
    <location>
        <position position="314"/>
    </location>
    <ligand>
        <name>substrate</name>
    </ligand>
</feature>
<feature type="binding site" evidence="1">
    <location>
        <position position="450"/>
    </location>
    <ligand>
        <name>substrate</name>
    </ligand>
</feature>
<feature type="binding site" evidence="4">
    <location>
        <position position="453"/>
    </location>
    <ligand>
        <name>Mg(2+)</name>
        <dbReference type="ChEBI" id="CHEBI:18420"/>
        <label>3</label>
    </ligand>
</feature>
<feature type="binding site" evidence="4">
    <location>
        <position position="457"/>
    </location>
    <ligand>
        <name>Mg(2+)</name>
        <dbReference type="ChEBI" id="CHEBI:18420"/>
        <label>3</label>
    </ligand>
</feature>
<feature type="site" description="Required for the use of hedycaryol as a transient intermediate during the reprotonation of germacrene A" evidence="2">
    <location>
        <position position="303"/>
    </location>
</feature>
<organism>
    <name type="scientific">Zea mays</name>
    <name type="common">Maize</name>
    <dbReference type="NCBI Taxonomy" id="4577"/>
    <lineage>
        <taxon>Eukaryota</taxon>
        <taxon>Viridiplantae</taxon>
        <taxon>Streptophyta</taxon>
        <taxon>Embryophyta</taxon>
        <taxon>Tracheophyta</taxon>
        <taxon>Spermatophyta</taxon>
        <taxon>Magnoliopsida</taxon>
        <taxon>Liliopsida</taxon>
        <taxon>Poales</taxon>
        <taxon>Poaceae</taxon>
        <taxon>PACMAD clade</taxon>
        <taxon>Panicoideae</taxon>
        <taxon>Andropogonodae</taxon>
        <taxon>Andropogoneae</taxon>
        <taxon>Tripsacinae</taxon>
        <taxon>Zea</taxon>
    </lineage>
</organism>
<gene>
    <name evidence="7" type="primary">EDS</name>
    <name evidence="7" type="synonym">TPS17</name>
    <name evidence="8" type="synonym">TSGD1_1</name>
    <name evidence="8" type="ORF">Zm00014a_032508</name>
</gene>
<proteinExistence type="inferred from homology"/>
<reference key="1">
    <citation type="journal article" date="2018" name="Nat. Genet.">
        <title>Extensive intraspecific gene order and gene structural variations between Mo17 and other maize genomes.</title>
        <authorList>
            <person name="Sun S."/>
            <person name="Zhou Y."/>
            <person name="Chen J."/>
            <person name="Shi J."/>
            <person name="Zhao H."/>
            <person name="Zhao H."/>
            <person name="Song W."/>
            <person name="Zhang M."/>
            <person name="Cui Y."/>
            <person name="Dong X."/>
            <person name="Liu H."/>
            <person name="Ma X."/>
            <person name="Jiao Y."/>
            <person name="Wang B."/>
            <person name="Wei X."/>
            <person name="Stein J.C."/>
            <person name="Glaubitz J.C."/>
            <person name="Lu F."/>
            <person name="Yu G."/>
            <person name="Liang C."/>
            <person name="Fengler K."/>
            <person name="Li B."/>
            <person name="Rafalski A."/>
            <person name="Schnable P.S."/>
            <person name="Ware D.H."/>
            <person name="Buckler E.S."/>
            <person name="Lai J."/>
        </authorList>
    </citation>
    <scope>NUCLEOTIDE SEQUENCE [LARGE SCALE GENOMIC DNA]</scope>
    <source>
        <strain>cv. Missouri 17</strain>
        <tissue>Seedling</tissue>
    </source>
</reference>
<keyword id="KW-0963">Cytoplasm</keyword>
<keyword id="KW-0456">Lyase</keyword>
<keyword id="KW-0460">Magnesium</keyword>
<keyword id="KW-0464">Manganese</keyword>
<keyword id="KW-0479">Metal-binding</keyword>
<keyword id="KW-0611">Plant defense</keyword>
<keyword id="KW-1185">Reference proteome</keyword>
<protein>
    <recommendedName>
        <fullName evidence="7">Eudesmanediol synthase</fullName>
        <shortName evidence="7">ZmEDS</shortName>
        <ecNumber evidence="2">4.2.3.197</ecNumber>
    </recommendedName>
    <alternativeName>
        <fullName evidence="8">(+)-germacrene D synthase</fullName>
    </alternativeName>
    <alternativeName>
        <fullName evidence="7">Terpene synthase 17</fullName>
    </alternativeName>
</protein>
<dbReference type="EC" id="4.2.3.197" evidence="2"/>
<dbReference type="EMBL" id="NCVQ01000003">
    <property type="protein sequence ID" value="PWZ40931.1"/>
    <property type="molecule type" value="Genomic_DNA"/>
</dbReference>
<dbReference type="SMR" id="A0A3L6G2C1"/>
<dbReference type="FunCoup" id="A0A3L6G2C1">
    <property type="interactions" value="275"/>
</dbReference>
<dbReference type="STRING" id="4577.A0A3L6G2C1"/>
<dbReference type="InParanoid" id="A0A3L6G2C1"/>
<dbReference type="UniPathway" id="UPA00213"/>
<dbReference type="Proteomes" id="UP000007305">
    <property type="component" value="Unplaced"/>
</dbReference>
<dbReference type="Proteomes" id="UP000251960">
    <property type="component" value="Chromosome 2"/>
</dbReference>
<dbReference type="ExpressionAtlas" id="A0A3L6G2C1">
    <property type="expression patterns" value="baseline and differential"/>
</dbReference>
<dbReference type="GO" id="GO:0005737">
    <property type="term" value="C:cytoplasm"/>
    <property type="evidence" value="ECO:0007669"/>
    <property type="project" value="UniProtKB-SubCell"/>
</dbReference>
<dbReference type="GO" id="GO:0000287">
    <property type="term" value="F:magnesium ion binding"/>
    <property type="evidence" value="ECO:0007669"/>
    <property type="project" value="InterPro"/>
</dbReference>
<dbReference type="GO" id="GO:0010333">
    <property type="term" value="F:terpene synthase activity"/>
    <property type="evidence" value="ECO:0007669"/>
    <property type="project" value="InterPro"/>
</dbReference>
<dbReference type="GO" id="GO:0006952">
    <property type="term" value="P:defense response"/>
    <property type="evidence" value="ECO:0007669"/>
    <property type="project" value="UniProtKB-KW"/>
</dbReference>
<dbReference type="GO" id="GO:0016102">
    <property type="term" value="P:diterpenoid biosynthetic process"/>
    <property type="evidence" value="ECO:0007669"/>
    <property type="project" value="InterPro"/>
</dbReference>
<dbReference type="CDD" id="cd00684">
    <property type="entry name" value="Terpene_cyclase_plant_C1"/>
    <property type="match status" value="1"/>
</dbReference>
<dbReference type="FunFam" id="1.10.600.10:FF:000007">
    <property type="entry name" value="Isoprene synthase, chloroplastic"/>
    <property type="match status" value="1"/>
</dbReference>
<dbReference type="FunFam" id="1.50.10.130:FF:000006">
    <property type="entry name" value="Terpene synthase 7"/>
    <property type="match status" value="1"/>
</dbReference>
<dbReference type="Gene3D" id="1.10.600.10">
    <property type="entry name" value="Farnesyl Diphosphate Synthase"/>
    <property type="match status" value="1"/>
</dbReference>
<dbReference type="Gene3D" id="1.50.10.130">
    <property type="entry name" value="Terpene synthase, N-terminal domain"/>
    <property type="match status" value="1"/>
</dbReference>
<dbReference type="InterPro" id="IPR008949">
    <property type="entry name" value="Isoprenoid_synthase_dom_sf"/>
</dbReference>
<dbReference type="InterPro" id="IPR034741">
    <property type="entry name" value="Terpene_cyclase-like_1_C"/>
</dbReference>
<dbReference type="InterPro" id="IPR044814">
    <property type="entry name" value="Terpene_cyclase_plant_C1"/>
</dbReference>
<dbReference type="InterPro" id="IPR001906">
    <property type="entry name" value="Terpene_synth_N"/>
</dbReference>
<dbReference type="InterPro" id="IPR036965">
    <property type="entry name" value="Terpene_synth_N_sf"/>
</dbReference>
<dbReference type="InterPro" id="IPR050148">
    <property type="entry name" value="Terpene_synthase-like"/>
</dbReference>
<dbReference type="InterPro" id="IPR005630">
    <property type="entry name" value="Terpene_synthase_metal-bd"/>
</dbReference>
<dbReference type="InterPro" id="IPR008930">
    <property type="entry name" value="Terpenoid_cyclase/PrenylTrfase"/>
</dbReference>
<dbReference type="PANTHER" id="PTHR31225:SF109">
    <property type="entry name" value="EUDESMANEDIOL SYNTHASE"/>
    <property type="match status" value="1"/>
</dbReference>
<dbReference type="PANTHER" id="PTHR31225">
    <property type="entry name" value="OS04G0344100 PROTEIN-RELATED"/>
    <property type="match status" value="1"/>
</dbReference>
<dbReference type="Pfam" id="PF01397">
    <property type="entry name" value="Terpene_synth"/>
    <property type="match status" value="1"/>
</dbReference>
<dbReference type="Pfam" id="PF03936">
    <property type="entry name" value="Terpene_synth_C"/>
    <property type="match status" value="1"/>
</dbReference>
<dbReference type="SFLD" id="SFLDS00005">
    <property type="entry name" value="Isoprenoid_Synthase_Type_I"/>
    <property type="match status" value="1"/>
</dbReference>
<dbReference type="SFLD" id="SFLDG01019">
    <property type="entry name" value="Terpene_Cyclase_Like_1_C_Termi"/>
    <property type="match status" value="1"/>
</dbReference>
<dbReference type="SUPFAM" id="SSF48239">
    <property type="entry name" value="Terpenoid cyclases/Protein prenyltransferases"/>
    <property type="match status" value="1"/>
</dbReference>
<dbReference type="SUPFAM" id="SSF48576">
    <property type="entry name" value="Terpenoid synthases"/>
    <property type="match status" value="1"/>
</dbReference>
<accession>A0A3L6G2C1</accession>